<comment type="function">
    <text evidence="1">Required for disulfide bond formation in some periplasmic proteins. Acts by oxidizing the DsbA protein.</text>
</comment>
<comment type="subcellular location">
    <subcellularLocation>
        <location evidence="1">Cell inner membrane</location>
        <topology evidence="1">Multi-pass membrane protein</topology>
    </subcellularLocation>
</comment>
<comment type="similarity">
    <text evidence="1">Belongs to the DsbB family.</text>
</comment>
<dbReference type="EMBL" id="CR543861">
    <property type="protein sequence ID" value="CAG70190.1"/>
    <property type="molecule type" value="Genomic_DNA"/>
</dbReference>
<dbReference type="RefSeq" id="WP_004923253.1">
    <property type="nucleotide sequence ID" value="NC_005966.1"/>
</dbReference>
<dbReference type="SMR" id="Q6F6X5"/>
<dbReference type="STRING" id="202950.GCA_001485005_01666"/>
<dbReference type="GeneID" id="45235723"/>
<dbReference type="KEGG" id="aci:ACIAD3548"/>
<dbReference type="eggNOG" id="COG1495">
    <property type="taxonomic scope" value="Bacteria"/>
</dbReference>
<dbReference type="HOGENOM" id="CLU_098660_1_1_6"/>
<dbReference type="OrthoDB" id="3711263at2"/>
<dbReference type="BioCyc" id="ASP62977:ACIAD_RS16045-MONOMER"/>
<dbReference type="Proteomes" id="UP000000430">
    <property type="component" value="Chromosome"/>
</dbReference>
<dbReference type="GO" id="GO:0005886">
    <property type="term" value="C:plasma membrane"/>
    <property type="evidence" value="ECO:0007669"/>
    <property type="project" value="UniProtKB-SubCell"/>
</dbReference>
<dbReference type="GO" id="GO:0009055">
    <property type="term" value="F:electron transfer activity"/>
    <property type="evidence" value="ECO:0007669"/>
    <property type="project" value="UniProtKB-UniRule"/>
</dbReference>
<dbReference type="GO" id="GO:0015035">
    <property type="term" value="F:protein-disulfide reductase activity"/>
    <property type="evidence" value="ECO:0007669"/>
    <property type="project" value="UniProtKB-UniRule"/>
</dbReference>
<dbReference type="GO" id="GO:0006457">
    <property type="term" value="P:protein folding"/>
    <property type="evidence" value="ECO:0007669"/>
    <property type="project" value="InterPro"/>
</dbReference>
<dbReference type="Gene3D" id="1.20.1550.10">
    <property type="entry name" value="DsbB-like"/>
    <property type="match status" value="1"/>
</dbReference>
<dbReference type="HAMAP" id="MF_00286">
    <property type="entry name" value="DsbB"/>
    <property type="match status" value="1"/>
</dbReference>
<dbReference type="InterPro" id="IPR003752">
    <property type="entry name" value="DiS_bond_form_DsbB/BdbC"/>
</dbReference>
<dbReference type="InterPro" id="IPR022920">
    <property type="entry name" value="Disulphide_bond_form_DsbB"/>
</dbReference>
<dbReference type="InterPro" id="IPR050183">
    <property type="entry name" value="DsbB"/>
</dbReference>
<dbReference type="InterPro" id="IPR023380">
    <property type="entry name" value="DsbB-like_sf"/>
</dbReference>
<dbReference type="PANTHER" id="PTHR36570">
    <property type="entry name" value="DISULFIDE BOND FORMATION PROTEIN B"/>
    <property type="match status" value="1"/>
</dbReference>
<dbReference type="PANTHER" id="PTHR36570:SF3">
    <property type="entry name" value="DISULFIDE BOND FORMATION PROTEIN B"/>
    <property type="match status" value="1"/>
</dbReference>
<dbReference type="Pfam" id="PF02600">
    <property type="entry name" value="DsbB"/>
    <property type="match status" value="1"/>
</dbReference>
<dbReference type="SUPFAM" id="SSF158442">
    <property type="entry name" value="DsbB-like"/>
    <property type="match status" value="1"/>
</dbReference>
<protein>
    <recommendedName>
        <fullName evidence="1">Disulfide bond formation protein B</fullName>
    </recommendedName>
    <alternativeName>
        <fullName evidence="1">Disulfide oxidoreductase</fullName>
    </alternativeName>
</protein>
<evidence type="ECO:0000255" key="1">
    <source>
        <dbReference type="HAMAP-Rule" id="MF_00286"/>
    </source>
</evidence>
<keyword id="KW-0997">Cell inner membrane</keyword>
<keyword id="KW-1003">Cell membrane</keyword>
<keyword id="KW-0143">Chaperone</keyword>
<keyword id="KW-1015">Disulfide bond</keyword>
<keyword id="KW-0249">Electron transport</keyword>
<keyword id="KW-0472">Membrane</keyword>
<keyword id="KW-0560">Oxidoreductase</keyword>
<keyword id="KW-0676">Redox-active center</keyword>
<keyword id="KW-0812">Transmembrane</keyword>
<keyword id="KW-1133">Transmembrane helix</keyword>
<keyword id="KW-0813">Transport</keyword>
<sequence>MQWSYRFVSGLLVLASIVGMTFALYLEHFKGLEPCPLCIFQRVGLMAMGIVALIAFLHNPVSNAFKRVYAFLATLGILWSVGVAIRHVWLQTLPPDQVPSCGPGLNYLLDALPLKTVLQQVLQGSGECAAIHWTFLGQSLPVWSLAYFSLILLVCVWQLLRRYPVIVTKKK</sequence>
<organism>
    <name type="scientific">Acinetobacter baylyi (strain ATCC 33305 / BD413 / ADP1)</name>
    <dbReference type="NCBI Taxonomy" id="62977"/>
    <lineage>
        <taxon>Bacteria</taxon>
        <taxon>Pseudomonadati</taxon>
        <taxon>Pseudomonadota</taxon>
        <taxon>Gammaproteobacteria</taxon>
        <taxon>Moraxellales</taxon>
        <taxon>Moraxellaceae</taxon>
        <taxon>Acinetobacter</taxon>
    </lineage>
</organism>
<proteinExistence type="inferred from homology"/>
<name>DSBB_ACIAD</name>
<accession>Q6F6X5</accession>
<reference key="1">
    <citation type="journal article" date="2004" name="Nucleic Acids Res.">
        <title>Unique features revealed by the genome sequence of Acinetobacter sp. ADP1, a versatile and naturally transformation competent bacterium.</title>
        <authorList>
            <person name="Barbe V."/>
            <person name="Vallenet D."/>
            <person name="Fonknechten N."/>
            <person name="Kreimeyer A."/>
            <person name="Oztas S."/>
            <person name="Labarre L."/>
            <person name="Cruveiller S."/>
            <person name="Robert C."/>
            <person name="Duprat S."/>
            <person name="Wincker P."/>
            <person name="Ornston L.N."/>
            <person name="Weissenbach J."/>
            <person name="Marliere P."/>
            <person name="Cohen G.N."/>
            <person name="Medigue C."/>
        </authorList>
    </citation>
    <scope>NUCLEOTIDE SEQUENCE [LARGE SCALE GENOMIC DNA]</scope>
    <source>
        <strain>ATCC 33305 / BD413 / ADP1</strain>
    </source>
</reference>
<gene>
    <name evidence="1" type="primary">dsbB</name>
    <name type="ordered locus">ACIAD3548</name>
</gene>
<feature type="chain" id="PRO_0000298332" description="Disulfide bond formation protein B">
    <location>
        <begin position="1"/>
        <end position="171"/>
    </location>
</feature>
<feature type="topological domain" description="Cytoplasmic" evidence="1">
    <location>
        <begin position="1"/>
        <end position="8"/>
    </location>
</feature>
<feature type="transmembrane region" description="Helical" evidence="1">
    <location>
        <begin position="9"/>
        <end position="25"/>
    </location>
</feature>
<feature type="topological domain" description="Periplasmic" evidence="1">
    <location>
        <begin position="26"/>
        <end position="43"/>
    </location>
</feature>
<feature type="transmembrane region" description="Helical" evidence="1">
    <location>
        <begin position="44"/>
        <end position="60"/>
    </location>
</feature>
<feature type="topological domain" description="Cytoplasmic" evidence="1">
    <location>
        <begin position="61"/>
        <end position="67"/>
    </location>
</feature>
<feature type="transmembrane region" description="Helical" evidence="1">
    <location>
        <begin position="68"/>
        <end position="85"/>
    </location>
</feature>
<feature type="topological domain" description="Periplasmic" evidence="1">
    <location>
        <begin position="86"/>
        <end position="142"/>
    </location>
</feature>
<feature type="transmembrane region" description="Helical" evidence="1">
    <location>
        <begin position="143"/>
        <end position="161"/>
    </location>
</feature>
<feature type="topological domain" description="Cytoplasmic" evidence="1">
    <location>
        <begin position="162"/>
        <end position="171"/>
    </location>
</feature>
<feature type="disulfide bond" description="Redox-active" evidence="1">
    <location>
        <begin position="35"/>
        <end position="38"/>
    </location>
</feature>
<feature type="disulfide bond" description="Redox-active" evidence="1">
    <location>
        <begin position="101"/>
        <end position="128"/>
    </location>
</feature>